<dbReference type="EMBL" id="CR382138">
    <property type="protein sequence ID" value="CAG88732.2"/>
    <property type="molecule type" value="Genomic_DNA"/>
</dbReference>
<dbReference type="RefSeq" id="XP_460425.2">
    <property type="nucleotide sequence ID" value="XM_460425.2"/>
</dbReference>
<dbReference type="SMR" id="Q6BMZ5"/>
<dbReference type="FunCoup" id="Q6BMZ5">
    <property type="interactions" value="285"/>
</dbReference>
<dbReference type="STRING" id="284592.Q6BMZ5"/>
<dbReference type="GeneID" id="2903828"/>
<dbReference type="KEGG" id="dha:DEHA2F01430g"/>
<dbReference type="VEuPathDB" id="FungiDB:DEHA2F01430g"/>
<dbReference type="eggNOG" id="ENOG502S2IS">
    <property type="taxonomic scope" value="Eukaryota"/>
</dbReference>
<dbReference type="HOGENOM" id="CLU_126135_0_0_1"/>
<dbReference type="InParanoid" id="Q6BMZ5"/>
<dbReference type="OMA" id="PKAYLHQ"/>
<dbReference type="OrthoDB" id="4068648at2759"/>
<dbReference type="Proteomes" id="UP000000599">
    <property type="component" value="Chromosome F"/>
</dbReference>
<dbReference type="GO" id="GO:0030686">
    <property type="term" value="C:90S preribosome"/>
    <property type="evidence" value="ECO:0007669"/>
    <property type="project" value="InterPro"/>
</dbReference>
<dbReference type="GO" id="GO:0005730">
    <property type="term" value="C:nucleolus"/>
    <property type="evidence" value="ECO:0007669"/>
    <property type="project" value="UniProtKB-SubCell"/>
</dbReference>
<dbReference type="GO" id="GO:0030688">
    <property type="term" value="C:preribosome, small subunit precursor"/>
    <property type="evidence" value="ECO:0007669"/>
    <property type="project" value="InterPro"/>
</dbReference>
<dbReference type="GO" id="GO:0000462">
    <property type="term" value="P:maturation of SSU-rRNA from tricistronic rRNA transcript (SSU-rRNA, 5.8S rRNA, LSU-rRNA)"/>
    <property type="evidence" value="ECO:0007669"/>
    <property type="project" value="InterPro"/>
</dbReference>
<dbReference type="InterPro" id="IPR028160">
    <property type="entry name" value="Slx9-like"/>
</dbReference>
<dbReference type="Pfam" id="PF15341">
    <property type="entry name" value="SLX9"/>
    <property type="match status" value="1"/>
</dbReference>
<protein>
    <recommendedName>
        <fullName>Ribosome biogenesis protein SLX9</fullName>
    </recommendedName>
</protein>
<proteinExistence type="inferred from homology"/>
<accession>Q6BMZ5</accession>
<reference key="1">
    <citation type="journal article" date="2004" name="Nature">
        <title>Genome evolution in yeasts.</title>
        <authorList>
            <person name="Dujon B."/>
            <person name="Sherman D."/>
            <person name="Fischer G."/>
            <person name="Durrens P."/>
            <person name="Casaregola S."/>
            <person name="Lafontaine I."/>
            <person name="de Montigny J."/>
            <person name="Marck C."/>
            <person name="Neuveglise C."/>
            <person name="Talla E."/>
            <person name="Goffard N."/>
            <person name="Frangeul L."/>
            <person name="Aigle M."/>
            <person name="Anthouard V."/>
            <person name="Babour A."/>
            <person name="Barbe V."/>
            <person name="Barnay S."/>
            <person name="Blanchin S."/>
            <person name="Beckerich J.-M."/>
            <person name="Beyne E."/>
            <person name="Bleykasten C."/>
            <person name="Boisrame A."/>
            <person name="Boyer J."/>
            <person name="Cattolico L."/>
            <person name="Confanioleri F."/>
            <person name="de Daruvar A."/>
            <person name="Despons L."/>
            <person name="Fabre E."/>
            <person name="Fairhead C."/>
            <person name="Ferry-Dumazet H."/>
            <person name="Groppi A."/>
            <person name="Hantraye F."/>
            <person name="Hennequin C."/>
            <person name="Jauniaux N."/>
            <person name="Joyet P."/>
            <person name="Kachouri R."/>
            <person name="Kerrest A."/>
            <person name="Koszul R."/>
            <person name="Lemaire M."/>
            <person name="Lesur I."/>
            <person name="Ma L."/>
            <person name="Muller H."/>
            <person name="Nicaud J.-M."/>
            <person name="Nikolski M."/>
            <person name="Oztas S."/>
            <person name="Ozier-Kalogeropoulos O."/>
            <person name="Pellenz S."/>
            <person name="Potier S."/>
            <person name="Richard G.-F."/>
            <person name="Straub M.-L."/>
            <person name="Suleau A."/>
            <person name="Swennen D."/>
            <person name="Tekaia F."/>
            <person name="Wesolowski-Louvel M."/>
            <person name="Westhof E."/>
            <person name="Wirth B."/>
            <person name="Zeniou-Meyer M."/>
            <person name="Zivanovic Y."/>
            <person name="Bolotin-Fukuhara M."/>
            <person name="Thierry A."/>
            <person name="Bouchier C."/>
            <person name="Caudron B."/>
            <person name="Scarpelli C."/>
            <person name="Gaillardin C."/>
            <person name="Weissenbach J."/>
            <person name="Wincker P."/>
            <person name="Souciet J.-L."/>
        </authorList>
    </citation>
    <scope>NUCLEOTIDE SEQUENCE [LARGE SCALE GENOMIC DNA]</scope>
    <source>
        <strain>ATCC 36239 / CBS 767 / BCRC 21394 / JCM 1990 / NBRC 0083 / IGC 2968</strain>
    </source>
</reference>
<sequence length="188" mass="21162">MAVKKRTTLRDKHAKSNTKSNLSGKIAELKEENNGQESDYHENPFLKLSKVTKKDKQLNKSQNFSQKFDSSTLNTSSNISKSALRRRKRNARNELKPKMDELLQNLPETTNVIDPSAAAHKPNDHKSTKFIKSTKASANLPNATKQTGHAKIMTQESKNFTNVLKNPQFRSSPFSALKDAIAQNIQNQ</sequence>
<feature type="chain" id="PRO_0000333449" description="Ribosome biogenesis protein SLX9">
    <location>
        <begin position="1"/>
        <end position="188"/>
    </location>
</feature>
<feature type="region of interest" description="Disordered" evidence="2">
    <location>
        <begin position="1"/>
        <end position="89"/>
    </location>
</feature>
<feature type="compositionally biased region" description="Basic residues" evidence="2">
    <location>
        <begin position="1"/>
        <end position="16"/>
    </location>
</feature>
<feature type="compositionally biased region" description="Basic and acidic residues" evidence="2">
    <location>
        <begin position="27"/>
        <end position="44"/>
    </location>
</feature>
<feature type="compositionally biased region" description="Polar residues" evidence="2">
    <location>
        <begin position="59"/>
        <end position="81"/>
    </location>
</feature>
<name>SLX9_DEBHA</name>
<comment type="function">
    <text evidence="1">Involved in ribosome biogenesis. Required for normal pre-rRNA processing in internal transcribed spacer 1 (ITS1). May be involved in the movements of the replication forks (By similarity).</text>
</comment>
<comment type="subunit">
    <text evidence="1">Interacts with the 35S, 23S and 20S pre-rRNAs and with the U3 snoRNA.</text>
</comment>
<comment type="subcellular location">
    <subcellularLocation>
        <location evidence="1">Nucleus</location>
        <location evidence="1">Nucleolus</location>
    </subcellularLocation>
</comment>
<comment type="similarity">
    <text evidence="3">Belongs to the SLX9 family.</text>
</comment>
<evidence type="ECO:0000250" key="1"/>
<evidence type="ECO:0000256" key="2">
    <source>
        <dbReference type="SAM" id="MobiDB-lite"/>
    </source>
</evidence>
<evidence type="ECO:0000305" key="3"/>
<gene>
    <name type="primary">SLX9</name>
    <name type="ordered locus">DEHA2F01430g</name>
</gene>
<organism>
    <name type="scientific">Debaryomyces hansenii (strain ATCC 36239 / CBS 767 / BCRC 21394 / JCM 1990 / NBRC 0083 / IGC 2968)</name>
    <name type="common">Yeast</name>
    <name type="synonym">Torulaspora hansenii</name>
    <dbReference type="NCBI Taxonomy" id="284592"/>
    <lineage>
        <taxon>Eukaryota</taxon>
        <taxon>Fungi</taxon>
        <taxon>Dikarya</taxon>
        <taxon>Ascomycota</taxon>
        <taxon>Saccharomycotina</taxon>
        <taxon>Pichiomycetes</taxon>
        <taxon>Debaryomycetaceae</taxon>
        <taxon>Debaryomyces</taxon>
    </lineage>
</organism>
<keyword id="KW-0539">Nucleus</keyword>
<keyword id="KW-1185">Reference proteome</keyword>
<keyword id="KW-0690">Ribosome biogenesis</keyword>
<keyword id="KW-0698">rRNA processing</keyword>